<accession>A4YQ21</accession>
<name>PDXH_BRASO</name>
<protein>
    <recommendedName>
        <fullName evidence="1">Pyridoxine/pyridoxamine 5'-phosphate oxidase</fullName>
        <ecNumber evidence="1">1.4.3.5</ecNumber>
    </recommendedName>
    <alternativeName>
        <fullName evidence="1">PNP/PMP oxidase</fullName>
        <shortName evidence="1">PNPOx</shortName>
    </alternativeName>
    <alternativeName>
        <fullName evidence="1">Pyridoxal 5'-phosphate synthase</fullName>
    </alternativeName>
</protein>
<sequence>MTDPTSIKHQTTLTSGTSADFTQAGEPFALFAEWFAEASKSEPNDPNAMALSTVDADGLPDVRMVLMKGYDADGFVFYSHKASQKGQELAANPKAALLFHWKSLRRQVRIRGLVTPVTDAEADAYFATRPKQAQLGAWASKQSQPLESRFAFEQAIAKVATQYIIGEVPRPPGWSGWRITPVRMEFWHDRPFRLHDRIEFRREAAGQPWTKVRMYP</sequence>
<proteinExistence type="inferred from homology"/>
<feature type="chain" id="PRO_1000069682" description="Pyridoxine/pyridoxamine 5'-phosphate oxidase">
    <location>
        <begin position="1"/>
        <end position="216"/>
    </location>
</feature>
<feature type="binding site" evidence="1">
    <location>
        <begin position="63"/>
        <end position="68"/>
    </location>
    <ligand>
        <name>FMN</name>
        <dbReference type="ChEBI" id="CHEBI:58210"/>
    </ligand>
</feature>
<feature type="binding site" evidence="1">
    <location>
        <position position="68"/>
    </location>
    <ligand>
        <name>substrate</name>
    </ligand>
</feature>
<feature type="binding site" evidence="1">
    <location>
        <begin position="78"/>
        <end position="79"/>
    </location>
    <ligand>
        <name>FMN</name>
        <dbReference type="ChEBI" id="CHEBI:58210"/>
    </ligand>
</feature>
<feature type="binding site" evidence="1">
    <location>
        <position position="85"/>
    </location>
    <ligand>
        <name>FMN</name>
        <dbReference type="ChEBI" id="CHEBI:58210"/>
    </ligand>
</feature>
<feature type="binding site" evidence="1">
    <location>
        <position position="107"/>
    </location>
    <ligand>
        <name>FMN</name>
        <dbReference type="ChEBI" id="CHEBI:58210"/>
    </ligand>
</feature>
<feature type="binding site" evidence="1">
    <location>
        <position position="125"/>
    </location>
    <ligand>
        <name>substrate</name>
    </ligand>
</feature>
<feature type="binding site" evidence="1">
    <location>
        <position position="129"/>
    </location>
    <ligand>
        <name>substrate</name>
    </ligand>
</feature>
<feature type="binding site" evidence="1">
    <location>
        <begin position="142"/>
        <end position="143"/>
    </location>
    <ligand>
        <name>FMN</name>
        <dbReference type="ChEBI" id="CHEBI:58210"/>
    </ligand>
</feature>
<feature type="binding site" evidence="1">
    <location>
        <position position="187"/>
    </location>
    <ligand>
        <name>FMN</name>
        <dbReference type="ChEBI" id="CHEBI:58210"/>
    </ligand>
</feature>
<feature type="binding site" evidence="1">
    <location>
        <begin position="193"/>
        <end position="195"/>
    </location>
    <ligand>
        <name>substrate</name>
    </ligand>
</feature>
<feature type="binding site" evidence="1">
    <location>
        <position position="197"/>
    </location>
    <ligand>
        <name>FMN</name>
        <dbReference type="ChEBI" id="CHEBI:58210"/>
    </ligand>
</feature>
<dbReference type="EC" id="1.4.3.5" evidence="1"/>
<dbReference type="EMBL" id="CU234118">
    <property type="protein sequence ID" value="CAL75997.1"/>
    <property type="molecule type" value="Genomic_DNA"/>
</dbReference>
<dbReference type="RefSeq" id="WP_011925217.1">
    <property type="nucleotide sequence ID" value="NC_009445.1"/>
</dbReference>
<dbReference type="SMR" id="A4YQ21"/>
<dbReference type="STRING" id="114615.BRADO2146"/>
<dbReference type="KEGG" id="bra:BRADO2146"/>
<dbReference type="eggNOG" id="COG0259">
    <property type="taxonomic scope" value="Bacteria"/>
</dbReference>
<dbReference type="HOGENOM" id="CLU_032263_2_3_5"/>
<dbReference type="OrthoDB" id="9780392at2"/>
<dbReference type="UniPathway" id="UPA01068">
    <property type="reaction ID" value="UER00304"/>
</dbReference>
<dbReference type="UniPathway" id="UPA01068">
    <property type="reaction ID" value="UER00305"/>
</dbReference>
<dbReference type="Proteomes" id="UP000001994">
    <property type="component" value="Chromosome"/>
</dbReference>
<dbReference type="GO" id="GO:0010181">
    <property type="term" value="F:FMN binding"/>
    <property type="evidence" value="ECO:0007669"/>
    <property type="project" value="UniProtKB-UniRule"/>
</dbReference>
<dbReference type="GO" id="GO:0004733">
    <property type="term" value="F:pyridoxamine phosphate oxidase activity"/>
    <property type="evidence" value="ECO:0007669"/>
    <property type="project" value="UniProtKB-UniRule"/>
</dbReference>
<dbReference type="GO" id="GO:0008615">
    <property type="term" value="P:pyridoxine biosynthetic process"/>
    <property type="evidence" value="ECO:0007669"/>
    <property type="project" value="UniProtKB-KW"/>
</dbReference>
<dbReference type="FunFam" id="2.30.110.10:FF:000012">
    <property type="entry name" value="Predicted protein"/>
    <property type="match status" value="1"/>
</dbReference>
<dbReference type="Gene3D" id="2.30.110.10">
    <property type="entry name" value="Electron Transport, Fmn-binding Protein, Chain A"/>
    <property type="match status" value="1"/>
</dbReference>
<dbReference type="HAMAP" id="MF_01629">
    <property type="entry name" value="PdxH"/>
    <property type="match status" value="1"/>
</dbReference>
<dbReference type="InterPro" id="IPR000659">
    <property type="entry name" value="Pyridox_Oxase"/>
</dbReference>
<dbReference type="InterPro" id="IPR019740">
    <property type="entry name" value="Pyridox_Oxase_CS"/>
</dbReference>
<dbReference type="InterPro" id="IPR011576">
    <property type="entry name" value="Pyridox_Oxase_N"/>
</dbReference>
<dbReference type="InterPro" id="IPR019576">
    <property type="entry name" value="Pyridoxamine_oxidase_dimer_C"/>
</dbReference>
<dbReference type="InterPro" id="IPR012349">
    <property type="entry name" value="Split_barrel_FMN-bd"/>
</dbReference>
<dbReference type="NCBIfam" id="TIGR00558">
    <property type="entry name" value="pdxH"/>
    <property type="match status" value="1"/>
</dbReference>
<dbReference type="NCBIfam" id="NF004231">
    <property type="entry name" value="PRK05679.1"/>
    <property type="match status" value="1"/>
</dbReference>
<dbReference type="PANTHER" id="PTHR10851:SF0">
    <property type="entry name" value="PYRIDOXINE-5'-PHOSPHATE OXIDASE"/>
    <property type="match status" value="1"/>
</dbReference>
<dbReference type="PANTHER" id="PTHR10851">
    <property type="entry name" value="PYRIDOXINE-5-PHOSPHATE OXIDASE"/>
    <property type="match status" value="1"/>
</dbReference>
<dbReference type="Pfam" id="PF10590">
    <property type="entry name" value="PNP_phzG_C"/>
    <property type="match status" value="1"/>
</dbReference>
<dbReference type="Pfam" id="PF01243">
    <property type="entry name" value="PNPOx_N"/>
    <property type="match status" value="1"/>
</dbReference>
<dbReference type="PIRSF" id="PIRSF000190">
    <property type="entry name" value="Pyd_amn-ph_oxd"/>
    <property type="match status" value="1"/>
</dbReference>
<dbReference type="SUPFAM" id="SSF50475">
    <property type="entry name" value="FMN-binding split barrel"/>
    <property type="match status" value="1"/>
</dbReference>
<dbReference type="PROSITE" id="PS01064">
    <property type="entry name" value="PYRIDOX_OXIDASE"/>
    <property type="match status" value="1"/>
</dbReference>
<gene>
    <name evidence="1" type="primary">pdxH</name>
    <name type="ordered locus">BRADO2146</name>
</gene>
<organism>
    <name type="scientific">Bradyrhizobium sp. (strain ORS 278)</name>
    <dbReference type="NCBI Taxonomy" id="114615"/>
    <lineage>
        <taxon>Bacteria</taxon>
        <taxon>Pseudomonadati</taxon>
        <taxon>Pseudomonadota</taxon>
        <taxon>Alphaproteobacteria</taxon>
        <taxon>Hyphomicrobiales</taxon>
        <taxon>Nitrobacteraceae</taxon>
        <taxon>Bradyrhizobium</taxon>
    </lineage>
</organism>
<evidence type="ECO:0000255" key="1">
    <source>
        <dbReference type="HAMAP-Rule" id="MF_01629"/>
    </source>
</evidence>
<reference key="1">
    <citation type="journal article" date="2007" name="Science">
        <title>Legumes symbioses: absence of nod genes in photosynthetic bradyrhizobia.</title>
        <authorList>
            <person name="Giraud E."/>
            <person name="Moulin L."/>
            <person name="Vallenet D."/>
            <person name="Barbe V."/>
            <person name="Cytryn E."/>
            <person name="Avarre J.-C."/>
            <person name="Jaubert M."/>
            <person name="Simon D."/>
            <person name="Cartieaux F."/>
            <person name="Prin Y."/>
            <person name="Bena G."/>
            <person name="Hannibal L."/>
            <person name="Fardoux J."/>
            <person name="Kojadinovic M."/>
            <person name="Vuillet L."/>
            <person name="Lajus A."/>
            <person name="Cruveiller S."/>
            <person name="Rouy Z."/>
            <person name="Mangenot S."/>
            <person name="Segurens B."/>
            <person name="Dossat C."/>
            <person name="Franck W.L."/>
            <person name="Chang W.-S."/>
            <person name="Saunders E."/>
            <person name="Bruce D."/>
            <person name="Richardson P."/>
            <person name="Normand P."/>
            <person name="Dreyfus B."/>
            <person name="Pignol D."/>
            <person name="Stacey G."/>
            <person name="Emerich D."/>
            <person name="Vermeglio A."/>
            <person name="Medigue C."/>
            <person name="Sadowsky M."/>
        </authorList>
    </citation>
    <scope>NUCLEOTIDE SEQUENCE [LARGE SCALE GENOMIC DNA]</scope>
    <source>
        <strain>ORS 278</strain>
    </source>
</reference>
<comment type="function">
    <text evidence="1">Catalyzes the oxidation of either pyridoxine 5'-phosphate (PNP) or pyridoxamine 5'-phosphate (PMP) into pyridoxal 5'-phosphate (PLP).</text>
</comment>
<comment type="catalytic activity">
    <reaction evidence="1">
        <text>pyridoxamine 5'-phosphate + O2 + H2O = pyridoxal 5'-phosphate + H2O2 + NH4(+)</text>
        <dbReference type="Rhea" id="RHEA:15817"/>
        <dbReference type="ChEBI" id="CHEBI:15377"/>
        <dbReference type="ChEBI" id="CHEBI:15379"/>
        <dbReference type="ChEBI" id="CHEBI:16240"/>
        <dbReference type="ChEBI" id="CHEBI:28938"/>
        <dbReference type="ChEBI" id="CHEBI:58451"/>
        <dbReference type="ChEBI" id="CHEBI:597326"/>
        <dbReference type="EC" id="1.4.3.5"/>
    </reaction>
</comment>
<comment type="catalytic activity">
    <reaction evidence="1">
        <text>pyridoxine 5'-phosphate + O2 = pyridoxal 5'-phosphate + H2O2</text>
        <dbReference type="Rhea" id="RHEA:15149"/>
        <dbReference type="ChEBI" id="CHEBI:15379"/>
        <dbReference type="ChEBI" id="CHEBI:16240"/>
        <dbReference type="ChEBI" id="CHEBI:58589"/>
        <dbReference type="ChEBI" id="CHEBI:597326"/>
        <dbReference type="EC" id="1.4.3.5"/>
    </reaction>
</comment>
<comment type="cofactor">
    <cofactor evidence="1">
        <name>FMN</name>
        <dbReference type="ChEBI" id="CHEBI:58210"/>
    </cofactor>
    <text evidence="1">Binds 1 FMN per subunit.</text>
</comment>
<comment type="pathway">
    <text evidence="1">Cofactor metabolism; pyridoxal 5'-phosphate salvage; pyridoxal 5'-phosphate from pyridoxamine 5'-phosphate: step 1/1.</text>
</comment>
<comment type="pathway">
    <text evidence="1">Cofactor metabolism; pyridoxal 5'-phosphate salvage; pyridoxal 5'-phosphate from pyridoxine 5'-phosphate: step 1/1.</text>
</comment>
<comment type="subunit">
    <text evidence="1">Homodimer.</text>
</comment>
<comment type="similarity">
    <text evidence="1">Belongs to the pyridoxamine 5'-phosphate oxidase family.</text>
</comment>
<keyword id="KW-0285">Flavoprotein</keyword>
<keyword id="KW-0288">FMN</keyword>
<keyword id="KW-0560">Oxidoreductase</keyword>
<keyword id="KW-0664">Pyridoxine biosynthesis</keyword>
<keyword id="KW-1185">Reference proteome</keyword>